<sequence length="432" mass="45655">MSKIVKIIGREIIDSRGNPTVEAEVHLEGGFVGMAAAPSGASTGSREALELRDGDKSRFLGKGVTKAVAAVNGPIAQALIGKDAKDQAGIDKIMIDLDGTENKSKFGANAILAVSLANAKAAAAAKGMPLYEHIAELNGTPGKYSMPVPMMNIINGGEHADNNVDIQEFMIQPVGAKTVKEAIRMGSEVFHHLAKVLKAKGMNTAVGDEGGYAPNLGSNAEALAVIAEAVKAAGYELGKDITLAMDCAASEFYKDGKYVLAGEGNKAFTSEEFTHFLEELTKQYPIVSIEDGLDESDWDGFAYQTKVLGDKIQLVGDDLFVTNTKILKEGIEKGIANSILIKFNQIGSLTETLAAIKMAKDAGYTAVISHRSGETEDATIADLAVGTAAGQIKTGSMSRSDRVAKYNQLIRIEEALGEKAPYNGRKEIKGQA</sequence>
<evidence type="ECO:0000255" key="1">
    <source>
        <dbReference type="HAMAP-Rule" id="MF_00318"/>
    </source>
</evidence>
<comment type="function">
    <text evidence="1">Catalyzes the reversible conversion of 2-phosphoglycerate (2-PG) into phosphoenolpyruvate (PEP). It is essential for the degradation of carbohydrates via glycolysis.</text>
</comment>
<comment type="catalytic activity">
    <reaction evidence="1">
        <text>(2R)-2-phosphoglycerate = phosphoenolpyruvate + H2O</text>
        <dbReference type="Rhea" id="RHEA:10164"/>
        <dbReference type="ChEBI" id="CHEBI:15377"/>
        <dbReference type="ChEBI" id="CHEBI:58289"/>
        <dbReference type="ChEBI" id="CHEBI:58702"/>
        <dbReference type="EC" id="4.2.1.11"/>
    </reaction>
</comment>
<comment type="cofactor">
    <cofactor evidence="1">
        <name>Mg(2+)</name>
        <dbReference type="ChEBI" id="CHEBI:18420"/>
    </cofactor>
    <text evidence="1">Binds a second Mg(2+) ion via substrate during catalysis.</text>
</comment>
<comment type="pathway">
    <text evidence="1">Carbohydrate degradation; glycolysis; pyruvate from D-glyceraldehyde 3-phosphate: step 4/5.</text>
</comment>
<comment type="subunit">
    <text evidence="1">Component of the RNA degradosome, a multiprotein complex involved in RNA processing and mRNA degradation.</text>
</comment>
<comment type="subcellular location">
    <subcellularLocation>
        <location evidence="1">Cytoplasm</location>
    </subcellularLocation>
    <subcellularLocation>
        <location evidence="1">Secreted</location>
    </subcellularLocation>
    <subcellularLocation>
        <location evidence="1">Cell surface</location>
    </subcellularLocation>
    <text evidence="1">Fractions of enolase are present in both the cytoplasm and on the cell surface.</text>
</comment>
<comment type="similarity">
    <text evidence="1">Belongs to the enolase family.</text>
</comment>
<name>ENO_ECO24</name>
<dbReference type="EC" id="4.2.1.11" evidence="1"/>
<dbReference type="EMBL" id="CP000800">
    <property type="protein sequence ID" value="ABV20649.1"/>
    <property type="molecule type" value="Genomic_DNA"/>
</dbReference>
<dbReference type="RefSeq" id="WP_000036723.1">
    <property type="nucleotide sequence ID" value="NC_009801.1"/>
</dbReference>
<dbReference type="SMR" id="A7ZQM2"/>
<dbReference type="GeneID" id="93779219"/>
<dbReference type="KEGG" id="ecw:EcE24377A_3083"/>
<dbReference type="HOGENOM" id="CLU_031223_2_1_6"/>
<dbReference type="UniPathway" id="UPA00109">
    <property type="reaction ID" value="UER00187"/>
</dbReference>
<dbReference type="Proteomes" id="UP000001122">
    <property type="component" value="Chromosome"/>
</dbReference>
<dbReference type="GO" id="GO:0009986">
    <property type="term" value="C:cell surface"/>
    <property type="evidence" value="ECO:0007669"/>
    <property type="project" value="UniProtKB-SubCell"/>
</dbReference>
<dbReference type="GO" id="GO:0005576">
    <property type="term" value="C:extracellular region"/>
    <property type="evidence" value="ECO:0007669"/>
    <property type="project" value="UniProtKB-SubCell"/>
</dbReference>
<dbReference type="GO" id="GO:0000015">
    <property type="term" value="C:phosphopyruvate hydratase complex"/>
    <property type="evidence" value="ECO:0007669"/>
    <property type="project" value="InterPro"/>
</dbReference>
<dbReference type="GO" id="GO:0000287">
    <property type="term" value="F:magnesium ion binding"/>
    <property type="evidence" value="ECO:0007669"/>
    <property type="project" value="UniProtKB-UniRule"/>
</dbReference>
<dbReference type="GO" id="GO:0004634">
    <property type="term" value="F:phosphopyruvate hydratase activity"/>
    <property type="evidence" value="ECO:0007669"/>
    <property type="project" value="UniProtKB-UniRule"/>
</dbReference>
<dbReference type="GO" id="GO:0006096">
    <property type="term" value="P:glycolytic process"/>
    <property type="evidence" value="ECO:0007669"/>
    <property type="project" value="UniProtKB-UniRule"/>
</dbReference>
<dbReference type="CDD" id="cd03313">
    <property type="entry name" value="enolase"/>
    <property type="match status" value="1"/>
</dbReference>
<dbReference type="FunFam" id="3.20.20.120:FF:000001">
    <property type="entry name" value="Enolase"/>
    <property type="match status" value="1"/>
</dbReference>
<dbReference type="FunFam" id="3.30.390.10:FF:000001">
    <property type="entry name" value="Enolase"/>
    <property type="match status" value="1"/>
</dbReference>
<dbReference type="Gene3D" id="3.20.20.120">
    <property type="entry name" value="Enolase-like C-terminal domain"/>
    <property type="match status" value="1"/>
</dbReference>
<dbReference type="Gene3D" id="3.30.390.10">
    <property type="entry name" value="Enolase-like, N-terminal domain"/>
    <property type="match status" value="1"/>
</dbReference>
<dbReference type="HAMAP" id="MF_00318">
    <property type="entry name" value="Enolase"/>
    <property type="match status" value="1"/>
</dbReference>
<dbReference type="InterPro" id="IPR000941">
    <property type="entry name" value="Enolase"/>
</dbReference>
<dbReference type="InterPro" id="IPR036849">
    <property type="entry name" value="Enolase-like_C_sf"/>
</dbReference>
<dbReference type="InterPro" id="IPR029017">
    <property type="entry name" value="Enolase-like_N"/>
</dbReference>
<dbReference type="InterPro" id="IPR020810">
    <property type="entry name" value="Enolase_C"/>
</dbReference>
<dbReference type="InterPro" id="IPR020809">
    <property type="entry name" value="Enolase_CS"/>
</dbReference>
<dbReference type="InterPro" id="IPR020811">
    <property type="entry name" value="Enolase_N"/>
</dbReference>
<dbReference type="NCBIfam" id="TIGR01060">
    <property type="entry name" value="eno"/>
    <property type="match status" value="1"/>
</dbReference>
<dbReference type="PANTHER" id="PTHR11902">
    <property type="entry name" value="ENOLASE"/>
    <property type="match status" value="1"/>
</dbReference>
<dbReference type="PANTHER" id="PTHR11902:SF1">
    <property type="entry name" value="ENOLASE"/>
    <property type="match status" value="1"/>
</dbReference>
<dbReference type="Pfam" id="PF00113">
    <property type="entry name" value="Enolase_C"/>
    <property type="match status" value="1"/>
</dbReference>
<dbReference type="Pfam" id="PF03952">
    <property type="entry name" value="Enolase_N"/>
    <property type="match status" value="1"/>
</dbReference>
<dbReference type="PIRSF" id="PIRSF001400">
    <property type="entry name" value="Enolase"/>
    <property type="match status" value="1"/>
</dbReference>
<dbReference type="PRINTS" id="PR00148">
    <property type="entry name" value="ENOLASE"/>
</dbReference>
<dbReference type="SFLD" id="SFLDS00001">
    <property type="entry name" value="Enolase"/>
    <property type="match status" value="1"/>
</dbReference>
<dbReference type="SFLD" id="SFLDF00002">
    <property type="entry name" value="enolase"/>
    <property type="match status" value="1"/>
</dbReference>
<dbReference type="SMART" id="SM01192">
    <property type="entry name" value="Enolase_C"/>
    <property type="match status" value="1"/>
</dbReference>
<dbReference type="SMART" id="SM01193">
    <property type="entry name" value="Enolase_N"/>
    <property type="match status" value="1"/>
</dbReference>
<dbReference type="SUPFAM" id="SSF51604">
    <property type="entry name" value="Enolase C-terminal domain-like"/>
    <property type="match status" value="1"/>
</dbReference>
<dbReference type="SUPFAM" id="SSF54826">
    <property type="entry name" value="Enolase N-terminal domain-like"/>
    <property type="match status" value="1"/>
</dbReference>
<dbReference type="PROSITE" id="PS00164">
    <property type="entry name" value="ENOLASE"/>
    <property type="match status" value="1"/>
</dbReference>
<reference key="1">
    <citation type="journal article" date="2008" name="J. Bacteriol.">
        <title>The pangenome structure of Escherichia coli: comparative genomic analysis of E. coli commensal and pathogenic isolates.</title>
        <authorList>
            <person name="Rasko D.A."/>
            <person name="Rosovitz M.J."/>
            <person name="Myers G.S.A."/>
            <person name="Mongodin E.F."/>
            <person name="Fricke W.F."/>
            <person name="Gajer P."/>
            <person name="Crabtree J."/>
            <person name="Sebaihia M."/>
            <person name="Thomson N.R."/>
            <person name="Chaudhuri R."/>
            <person name="Henderson I.R."/>
            <person name="Sperandio V."/>
            <person name="Ravel J."/>
        </authorList>
    </citation>
    <scope>NUCLEOTIDE SEQUENCE [LARGE SCALE GENOMIC DNA]</scope>
    <source>
        <strain>E24377A / ETEC</strain>
    </source>
</reference>
<proteinExistence type="inferred from homology"/>
<keyword id="KW-0963">Cytoplasm</keyword>
<keyword id="KW-0324">Glycolysis</keyword>
<keyword id="KW-0456">Lyase</keyword>
<keyword id="KW-0460">Magnesium</keyword>
<keyword id="KW-0479">Metal-binding</keyword>
<keyword id="KW-1185">Reference proteome</keyword>
<keyword id="KW-0964">Secreted</keyword>
<accession>A7ZQM2</accession>
<gene>
    <name evidence="1" type="primary">eno</name>
    <name type="ordered locus">EcE24377A_3083</name>
</gene>
<feature type="chain" id="PRO_1000059457" description="Enolase">
    <location>
        <begin position="1"/>
        <end position="432"/>
    </location>
</feature>
<feature type="active site" description="Proton donor" evidence="1">
    <location>
        <position position="209"/>
    </location>
</feature>
<feature type="active site" description="Proton acceptor" evidence="1">
    <location>
        <position position="342"/>
    </location>
</feature>
<feature type="binding site" evidence="1">
    <location>
        <position position="167"/>
    </location>
    <ligand>
        <name>(2R)-2-phosphoglycerate</name>
        <dbReference type="ChEBI" id="CHEBI:58289"/>
    </ligand>
</feature>
<feature type="binding site" evidence="1">
    <location>
        <position position="246"/>
    </location>
    <ligand>
        <name>Mg(2+)</name>
        <dbReference type="ChEBI" id="CHEBI:18420"/>
    </ligand>
</feature>
<feature type="binding site" evidence="1">
    <location>
        <position position="290"/>
    </location>
    <ligand>
        <name>Mg(2+)</name>
        <dbReference type="ChEBI" id="CHEBI:18420"/>
    </ligand>
</feature>
<feature type="binding site" evidence="1">
    <location>
        <position position="317"/>
    </location>
    <ligand>
        <name>Mg(2+)</name>
        <dbReference type="ChEBI" id="CHEBI:18420"/>
    </ligand>
</feature>
<feature type="binding site" evidence="1">
    <location>
        <position position="342"/>
    </location>
    <ligand>
        <name>(2R)-2-phosphoglycerate</name>
        <dbReference type="ChEBI" id="CHEBI:58289"/>
    </ligand>
</feature>
<feature type="binding site" evidence="1">
    <location>
        <position position="371"/>
    </location>
    <ligand>
        <name>(2R)-2-phosphoglycerate</name>
        <dbReference type="ChEBI" id="CHEBI:58289"/>
    </ligand>
</feature>
<feature type="binding site" evidence="1">
    <location>
        <position position="372"/>
    </location>
    <ligand>
        <name>(2R)-2-phosphoglycerate</name>
        <dbReference type="ChEBI" id="CHEBI:58289"/>
    </ligand>
</feature>
<feature type="binding site" evidence="1">
    <location>
        <position position="393"/>
    </location>
    <ligand>
        <name>(2R)-2-phosphoglycerate</name>
        <dbReference type="ChEBI" id="CHEBI:58289"/>
    </ligand>
</feature>
<protein>
    <recommendedName>
        <fullName evidence="1">Enolase</fullName>
        <ecNumber evidence="1">4.2.1.11</ecNumber>
    </recommendedName>
    <alternativeName>
        <fullName evidence="1">2-phospho-D-glycerate hydro-lyase</fullName>
    </alternativeName>
    <alternativeName>
        <fullName evidence="1">2-phosphoglycerate dehydratase</fullName>
    </alternativeName>
</protein>
<organism>
    <name type="scientific">Escherichia coli O139:H28 (strain E24377A / ETEC)</name>
    <dbReference type="NCBI Taxonomy" id="331111"/>
    <lineage>
        <taxon>Bacteria</taxon>
        <taxon>Pseudomonadati</taxon>
        <taxon>Pseudomonadota</taxon>
        <taxon>Gammaproteobacteria</taxon>
        <taxon>Enterobacterales</taxon>
        <taxon>Enterobacteriaceae</taxon>
        <taxon>Escherichia</taxon>
    </lineage>
</organism>